<protein>
    <recommendedName>
        <fullName evidence="1">2-C-methyl-D-erythritol 4-phosphate cytidylyltransferase</fullName>
        <ecNumber evidence="1">2.7.7.60</ecNumber>
    </recommendedName>
    <alternativeName>
        <fullName evidence="1">4-diphosphocytidyl-2C-methyl-D-erythritol synthase</fullName>
    </alternativeName>
    <alternativeName>
        <fullName evidence="1">MEP cytidylyltransferase</fullName>
        <shortName evidence="1">MCT</shortName>
    </alternativeName>
</protein>
<proteinExistence type="inferred from homology"/>
<organism>
    <name type="scientific">Paraburkholderia phymatum (strain DSM 17167 / CIP 108236 / LMG 21445 / STM815)</name>
    <name type="common">Burkholderia phymatum</name>
    <dbReference type="NCBI Taxonomy" id="391038"/>
    <lineage>
        <taxon>Bacteria</taxon>
        <taxon>Pseudomonadati</taxon>
        <taxon>Pseudomonadota</taxon>
        <taxon>Betaproteobacteria</taxon>
        <taxon>Burkholderiales</taxon>
        <taxon>Burkholderiaceae</taxon>
        <taxon>Paraburkholderia</taxon>
    </lineage>
</organism>
<feature type="chain" id="PRO_1000094314" description="2-C-methyl-D-erythritol 4-phosphate cytidylyltransferase">
    <location>
        <begin position="1"/>
        <end position="236"/>
    </location>
</feature>
<feature type="site" description="Transition state stabilizer" evidence="1">
    <location>
        <position position="17"/>
    </location>
</feature>
<feature type="site" description="Transition state stabilizer" evidence="1">
    <location>
        <position position="24"/>
    </location>
</feature>
<feature type="site" description="Positions MEP for the nucleophilic attack" evidence="1">
    <location>
        <position position="160"/>
    </location>
</feature>
<feature type="site" description="Positions MEP for the nucleophilic attack" evidence="1">
    <location>
        <position position="216"/>
    </location>
</feature>
<evidence type="ECO:0000255" key="1">
    <source>
        <dbReference type="HAMAP-Rule" id="MF_00108"/>
    </source>
</evidence>
<accession>B2JGK2</accession>
<comment type="function">
    <text evidence="1">Catalyzes the formation of 4-diphosphocytidyl-2-C-methyl-D-erythritol from CTP and 2-C-methyl-D-erythritol 4-phosphate (MEP).</text>
</comment>
<comment type="catalytic activity">
    <reaction evidence="1">
        <text>2-C-methyl-D-erythritol 4-phosphate + CTP + H(+) = 4-CDP-2-C-methyl-D-erythritol + diphosphate</text>
        <dbReference type="Rhea" id="RHEA:13429"/>
        <dbReference type="ChEBI" id="CHEBI:15378"/>
        <dbReference type="ChEBI" id="CHEBI:33019"/>
        <dbReference type="ChEBI" id="CHEBI:37563"/>
        <dbReference type="ChEBI" id="CHEBI:57823"/>
        <dbReference type="ChEBI" id="CHEBI:58262"/>
        <dbReference type="EC" id="2.7.7.60"/>
    </reaction>
</comment>
<comment type="pathway">
    <text evidence="1">Isoprenoid biosynthesis; isopentenyl diphosphate biosynthesis via DXP pathway; isopentenyl diphosphate from 1-deoxy-D-xylulose 5-phosphate: step 2/6.</text>
</comment>
<comment type="similarity">
    <text evidence="1">Belongs to the IspD/TarI cytidylyltransferase family. IspD subfamily.</text>
</comment>
<gene>
    <name evidence="1" type="primary">ispD</name>
    <name type="ordered locus">Bphy_0998</name>
</gene>
<dbReference type="EC" id="2.7.7.60" evidence="1"/>
<dbReference type="EMBL" id="CP001043">
    <property type="protein sequence ID" value="ACC70187.1"/>
    <property type="molecule type" value="Genomic_DNA"/>
</dbReference>
<dbReference type="RefSeq" id="WP_012400404.1">
    <property type="nucleotide sequence ID" value="NC_010622.1"/>
</dbReference>
<dbReference type="SMR" id="B2JGK2"/>
<dbReference type="STRING" id="391038.Bphy_0998"/>
<dbReference type="KEGG" id="bph:Bphy_0998"/>
<dbReference type="eggNOG" id="COG1211">
    <property type="taxonomic scope" value="Bacteria"/>
</dbReference>
<dbReference type="HOGENOM" id="CLU_061281_3_0_4"/>
<dbReference type="OrthoDB" id="9806837at2"/>
<dbReference type="UniPathway" id="UPA00056">
    <property type="reaction ID" value="UER00093"/>
</dbReference>
<dbReference type="Proteomes" id="UP000001192">
    <property type="component" value="Chromosome 1"/>
</dbReference>
<dbReference type="GO" id="GO:0050518">
    <property type="term" value="F:2-C-methyl-D-erythritol 4-phosphate cytidylyltransferase activity"/>
    <property type="evidence" value="ECO:0007669"/>
    <property type="project" value="UniProtKB-UniRule"/>
</dbReference>
<dbReference type="GO" id="GO:0019288">
    <property type="term" value="P:isopentenyl diphosphate biosynthetic process, methylerythritol 4-phosphate pathway"/>
    <property type="evidence" value="ECO:0007669"/>
    <property type="project" value="UniProtKB-UniRule"/>
</dbReference>
<dbReference type="CDD" id="cd02516">
    <property type="entry name" value="CDP-ME_synthetase"/>
    <property type="match status" value="1"/>
</dbReference>
<dbReference type="FunFam" id="3.90.550.10:FF:000003">
    <property type="entry name" value="2-C-methyl-D-erythritol 4-phosphate cytidylyltransferase"/>
    <property type="match status" value="1"/>
</dbReference>
<dbReference type="Gene3D" id="3.90.550.10">
    <property type="entry name" value="Spore Coat Polysaccharide Biosynthesis Protein SpsA, Chain A"/>
    <property type="match status" value="1"/>
</dbReference>
<dbReference type="HAMAP" id="MF_00108">
    <property type="entry name" value="IspD"/>
    <property type="match status" value="1"/>
</dbReference>
<dbReference type="InterPro" id="IPR001228">
    <property type="entry name" value="IspD"/>
</dbReference>
<dbReference type="InterPro" id="IPR034683">
    <property type="entry name" value="IspD/TarI"/>
</dbReference>
<dbReference type="InterPro" id="IPR050088">
    <property type="entry name" value="IspD/TarI_cytidylyltransf_bact"/>
</dbReference>
<dbReference type="InterPro" id="IPR018294">
    <property type="entry name" value="ISPD_synthase_CS"/>
</dbReference>
<dbReference type="InterPro" id="IPR029044">
    <property type="entry name" value="Nucleotide-diphossugar_trans"/>
</dbReference>
<dbReference type="NCBIfam" id="TIGR00453">
    <property type="entry name" value="ispD"/>
    <property type="match status" value="1"/>
</dbReference>
<dbReference type="PANTHER" id="PTHR32125">
    <property type="entry name" value="2-C-METHYL-D-ERYTHRITOL 4-PHOSPHATE CYTIDYLYLTRANSFERASE, CHLOROPLASTIC"/>
    <property type="match status" value="1"/>
</dbReference>
<dbReference type="PANTHER" id="PTHR32125:SF4">
    <property type="entry name" value="2-C-METHYL-D-ERYTHRITOL 4-PHOSPHATE CYTIDYLYLTRANSFERASE, CHLOROPLASTIC"/>
    <property type="match status" value="1"/>
</dbReference>
<dbReference type="Pfam" id="PF01128">
    <property type="entry name" value="IspD"/>
    <property type="match status" value="1"/>
</dbReference>
<dbReference type="SUPFAM" id="SSF53448">
    <property type="entry name" value="Nucleotide-diphospho-sugar transferases"/>
    <property type="match status" value="1"/>
</dbReference>
<dbReference type="PROSITE" id="PS01295">
    <property type="entry name" value="ISPD"/>
    <property type="match status" value="1"/>
</dbReference>
<name>ISPD_PARP8</name>
<reference key="1">
    <citation type="journal article" date="2014" name="Stand. Genomic Sci.">
        <title>Complete genome sequence of Burkholderia phymatum STM815(T), a broad host range and efficient nitrogen-fixing symbiont of Mimosa species.</title>
        <authorList>
            <person name="Moulin L."/>
            <person name="Klonowska A."/>
            <person name="Caroline B."/>
            <person name="Booth K."/>
            <person name="Vriezen J.A."/>
            <person name="Melkonian R."/>
            <person name="James E.K."/>
            <person name="Young J.P."/>
            <person name="Bena G."/>
            <person name="Hauser L."/>
            <person name="Land M."/>
            <person name="Kyrpides N."/>
            <person name="Bruce D."/>
            <person name="Chain P."/>
            <person name="Copeland A."/>
            <person name="Pitluck S."/>
            <person name="Woyke T."/>
            <person name="Lizotte-Waniewski M."/>
            <person name="Bristow J."/>
            <person name="Riley M."/>
        </authorList>
    </citation>
    <scope>NUCLEOTIDE SEQUENCE [LARGE SCALE GENOMIC DNA]</scope>
    <source>
        <strain>DSM 17167 / CIP 108236 / LMG 21445 / STM815</strain>
    </source>
</reference>
<keyword id="KW-0414">Isoprene biosynthesis</keyword>
<keyword id="KW-0548">Nucleotidyltransferase</keyword>
<keyword id="KW-1185">Reference proteome</keyword>
<keyword id="KW-0808">Transferase</keyword>
<sequence>MTSRLFALIPCAGTGSRSGAPMPKQYRTVAGRDMLHYSLAAFDACSEFAQTLVVIAPDDQHFDARRFGGLRFAVQRCGGASRQASVLNGLHALAGFGAHDDDWVLVHDAARPGITPALIRALVGALKDDAVGGIMALPVADTLKRVAPGTDNRIDHTEPRDGLWQAQTPQMFRIGMLRDAILRAQSDGHDLTDEASAIEWSGHAPRLVQGSLRNFKVTYPEDFDLAEAILGRGAAG</sequence>